<gene>
    <name evidence="1" type="primary">atpA</name>
    <name type="ordered locus">NT01EI_3910</name>
</gene>
<proteinExistence type="inferred from homology"/>
<protein>
    <recommendedName>
        <fullName evidence="1">ATP synthase subunit alpha</fullName>
        <ecNumber evidence="1">7.1.2.2</ecNumber>
    </recommendedName>
    <alternativeName>
        <fullName evidence="1">ATP synthase F1 sector subunit alpha</fullName>
    </alternativeName>
    <alternativeName>
        <fullName evidence="1">F-ATPase subunit alpha</fullName>
    </alternativeName>
</protein>
<organism>
    <name type="scientific">Edwardsiella ictaluri (strain 93-146)</name>
    <dbReference type="NCBI Taxonomy" id="634503"/>
    <lineage>
        <taxon>Bacteria</taxon>
        <taxon>Pseudomonadati</taxon>
        <taxon>Pseudomonadota</taxon>
        <taxon>Gammaproteobacteria</taxon>
        <taxon>Enterobacterales</taxon>
        <taxon>Hafniaceae</taxon>
        <taxon>Edwardsiella</taxon>
    </lineage>
</organism>
<evidence type="ECO:0000255" key="1">
    <source>
        <dbReference type="HAMAP-Rule" id="MF_01346"/>
    </source>
</evidence>
<accession>C5BF38</accession>
<sequence>MQLNSTEISELIKQRIAQFDVVSEAHNEGTIVSVSDGIIRVHGLADVMQGEMIALPGNRYAIALNLERDSVGAVVMGPYADLAEGMKVKCTGRILEVPVGRGLLGRVVNTLGEPIDGKGPVEHDGFSAVEAIAPGVIERQSVDQPVQTGYKSVDAMIPIGRGQRELVIGDRQTGKTALAVDAIINQRDSGIKCIYVAVGQKASTIANVVRKLEEHGALANTIVVVASASESAALQYLAPYAGCAMGEYFRDRGEDALIIYDDLSKQAVAYRQISLLLRRPPGREAFPGDVFYLHSRLLERAARVNAEYVETFTKGEVKGKTGSLTALPIIETQAGDVSAFVPTNVISITDGQIFLESNLFNAGIRPAVNPGISVSRVGGAAQTKIMKKLSGGIRTALAQYRELAAFSQFASDLDDATRKQLSHGQKVTELLKQKQYAPMSVATQSLVLFAAERGYLEDVELAKVGGFEAALMAYVDREHADLMQQINQTGAYNDEIEGKLKGILDTFKATQSW</sequence>
<keyword id="KW-0066">ATP synthesis</keyword>
<keyword id="KW-0067">ATP-binding</keyword>
<keyword id="KW-0997">Cell inner membrane</keyword>
<keyword id="KW-1003">Cell membrane</keyword>
<keyword id="KW-0139">CF(1)</keyword>
<keyword id="KW-0375">Hydrogen ion transport</keyword>
<keyword id="KW-0406">Ion transport</keyword>
<keyword id="KW-0472">Membrane</keyword>
<keyword id="KW-0547">Nucleotide-binding</keyword>
<keyword id="KW-1278">Translocase</keyword>
<keyword id="KW-0813">Transport</keyword>
<reference key="1">
    <citation type="submission" date="2009-03" db="EMBL/GenBank/DDBJ databases">
        <title>Complete genome sequence of Edwardsiella ictaluri 93-146.</title>
        <authorList>
            <person name="Williams M.L."/>
            <person name="Gillaspy A.F."/>
            <person name="Dyer D.W."/>
            <person name="Thune R.L."/>
            <person name="Waldbieser G.C."/>
            <person name="Schuster S.C."/>
            <person name="Gipson J."/>
            <person name="Zaitshik J."/>
            <person name="Landry C."/>
            <person name="Lawrence M.L."/>
        </authorList>
    </citation>
    <scope>NUCLEOTIDE SEQUENCE [LARGE SCALE GENOMIC DNA]</scope>
    <source>
        <strain>93-146</strain>
    </source>
</reference>
<name>ATPA_EDWI9</name>
<comment type="function">
    <text evidence="1">Produces ATP from ADP in the presence of a proton gradient across the membrane. The alpha chain is a regulatory subunit.</text>
</comment>
<comment type="catalytic activity">
    <reaction evidence="1">
        <text>ATP + H2O + 4 H(+)(in) = ADP + phosphate + 5 H(+)(out)</text>
        <dbReference type="Rhea" id="RHEA:57720"/>
        <dbReference type="ChEBI" id="CHEBI:15377"/>
        <dbReference type="ChEBI" id="CHEBI:15378"/>
        <dbReference type="ChEBI" id="CHEBI:30616"/>
        <dbReference type="ChEBI" id="CHEBI:43474"/>
        <dbReference type="ChEBI" id="CHEBI:456216"/>
        <dbReference type="EC" id="7.1.2.2"/>
    </reaction>
</comment>
<comment type="subunit">
    <text evidence="1">F-type ATPases have 2 components, CF(1) - the catalytic core - and CF(0) - the membrane proton channel. CF(1) has five subunits: alpha(3), beta(3), gamma(1), delta(1), epsilon(1). CF(0) has three main subunits: a(1), b(2) and c(9-12). The alpha and beta chains form an alternating ring which encloses part of the gamma chain. CF(1) is attached to CF(0) by a central stalk formed by the gamma and epsilon chains, while a peripheral stalk is formed by the delta and b chains.</text>
</comment>
<comment type="subcellular location">
    <subcellularLocation>
        <location evidence="1">Cell inner membrane</location>
        <topology evidence="1">Peripheral membrane protein</topology>
    </subcellularLocation>
</comment>
<comment type="similarity">
    <text evidence="1">Belongs to the ATPase alpha/beta chains family.</text>
</comment>
<feature type="chain" id="PRO_1000214808" description="ATP synthase subunit alpha">
    <location>
        <begin position="1"/>
        <end position="513"/>
    </location>
</feature>
<feature type="binding site" evidence="1">
    <location>
        <begin position="169"/>
        <end position="176"/>
    </location>
    <ligand>
        <name>ATP</name>
        <dbReference type="ChEBI" id="CHEBI:30616"/>
    </ligand>
</feature>
<feature type="site" description="Required for activity" evidence="1">
    <location>
        <position position="373"/>
    </location>
</feature>
<dbReference type="EC" id="7.1.2.2" evidence="1"/>
<dbReference type="EMBL" id="CP001600">
    <property type="protein sequence ID" value="ACR71021.1"/>
    <property type="molecule type" value="Genomic_DNA"/>
</dbReference>
<dbReference type="RefSeq" id="WP_015873049.1">
    <property type="nucleotide sequence ID" value="NZ_CP169062.1"/>
</dbReference>
<dbReference type="SMR" id="C5BF38"/>
<dbReference type="STRING" id="67780.B6E78_11075"/>
<dbReference type="GeneID" id="69540726"/>
<dbReference type="KEGG" id="eic:NT01EI_3910"/>
<dbReference type="PATRIC" id="fig|634503.3.peg.3481"/>
<dbReference type="HOGENOM" id="CLU_010091_2_1_6"/>
<dbReference type="OrthoDB" id="9803053at2"/>
<dbReference type="Proteomes" id="UP000001485">
    <property type="component" value="Chromosome"/>
</dbReference>
<dbReference type="GO" id="GO:0005886">
    <property type="term" value="C:plasma membrane"/>
    <property type="evidence" value="ECO:0007669"/>
    <property type="project" value="UniProtKB-SubCell"/>
</dbReference>
<dbReference type="GO" id="GO:0045259">
    <property type="term" value="C:proton-transporting ATP synthase complex"/>
    <property type="evidence" value="ECO:0007669"/>
    <property type="project" value="UniProtKB-KW"/>
</dbReference>
<dbReference type="GO" id="GO:0043531">
    <property type="term" value="F:ADP binding"/>
    <property type="evidence" value="ECO:0007669"/>
    <property type="project" value="TreeGrafter"/>
</dbReference>
<dbReference type="GO" id="GO:0005524">
    <property type="term" value="F:ATP binding"/>
    <property type="evidence" value="ECO:0007669"/>
    <property type="project" value="UniProtKB-UniRule"/>
</dbReference>
<dbReference type="GO" id="GO:0046933">
    <property type="term" value="F:proton-transporting ATP synthase activity, rotational mechanism"/>
    <property type="evidence" value="ECO:0007669"/>
    <property type="project" value="UniProtKB-UniRule"/>
</dbReference>
<dbReference type="CDD" id="cd18113">
    <property type="entry name" value="ATP-synt_F1_alpha_C"/>
    <property type="match status" value="1"/>
</dbReference>
<dbReference type="CDD" id="cd18116">
    <property type="entry name" value="ATP-synt_F1_alpha_N"/>
    <property type="match status" value="1"/>
</dbReference>
<dbReference type="CDD" id="cd01132">
    <property type="entry name" value="F1-ATPase_alpha_CD"/>
    <property type="match status" value="1"/>
</dbReference>
<dbReference type="FunFam" id="1.20.150.20:FF:000001">
    <property type="entry name" value="ATP synthase subunit alpha"/>
    <property type="match status" value="1"/>
</dbReference>
<dbReference type="FunFam" id="2.40.30.20:FF:000001">
    <property type="entry name" value="ATP synthase subunit alpha"/>
    <property type="match status" value="1"/>
</dbReference>
<dbReference type="FunFam" id="3.40.50.300:FF:000002">
    <property type="entry name" value="ATP synthase subunit alpha"/>
    <property type="match status" value="1"/>
</dbReference>
<dbReference type="Gene3D" id="2.40.30.20">
    <property type="match status" value="1"/>
</dbReference>
<dbReference type="Gene3D" id="1.20.150.20">
    <property type="entry name" value="ATP synthase alpha/beta chain, C-terminal domain"/>
    <property type="match status" value="1"/>
</dbReference>
<dbReference type="Gene3D" id="3.40.50.300">
    <property type="entry name" value="P-loop containing nucleotide triphosphate hydrolases"/>
    <property type="match status" value="1"/>
</dbReference>
<dbReference type="HAMAP" id="MF_01346">
    <property type="entry name" value="ATP_synth_alpha_bact"/>
    <property type="match status" value="1"/>
</dbReference>
<dbReference type="InterPro" id="IPR023366">
    <property type="entry name" value="ATP_synth_asu-like_sf"/>
</dbReference>
<dbReference type="InterPro" id="IPR000793">
    <property type="entry name" value="ATP_synth_asu_C"/>
</dbReference>
<dbReference type="InterPro" id="IPR038376">
    <property type="entry name" value="ATP_synth_asu_C_sf"/>
</dbReference>
<dbReference type="InterPro" id="IPR033732">
    <property type="entry name" value="ATP_synth_F1_a_nt-bd_dom"/>
</dbReference>
<dbReference type="InterPro" id="IPR005294">
    <property type="entry name" value="ATP_synth_F1_asu"/>
</dbReference>
<dbReference type="InterPro" id="IPR020003">
    <property type="entry name" value="ATPase_a/bsu_AS"/>
</dbReference>
<dbReference type="InterPro" id="IPR004100">
    <property type="entry name" value="ATPase_F1/V1/A1_a/bsu_N"/>
</dbReference>
<dbReference type="InterPro" id="IPR036121">
    <property type="entry name" value="ATPase_F1/V1/A1_a/bsu_N_sf"/>
</dbReference>
<dbReference type="InterPro" id="IPR000194">
    <property type="entry name" value="ATPase_F1/V1/A1_a/bsu_nucl-bd"/>
</dbReference>
<dbReference type="InterPro" id="IPR027417">
    <property type="entry name" value="P-loop_NTPase"/>
</dbReference>
<dbReference type="NCBIfam" id="TIGR00962">
    <property type="entry name" value="atpA"/>
    <property type="match status" value="1"/>
</dbReference>
<dbReference type="NCBIfam" id="NF009884">
    <property type="entry name" value="PRK13343.1"/>
    <property type="match status" value="1"/>
</dbReference>
<dbReference type="PANTHER" id="PTHR48082">
    <property type="entry name" value="ATP SYNTHASE SUBUNIT ALPHA, MITOCHONDRIAL"/>
    <property type="match status" value="1"/>
</dbReference>
<dbReference type="PANTHER" id="PTHR48082:SF2">
    <property type="entry name" value="ATP SYNTHASE SUBUNIT ALPHA, MITOCHONDRIAL"/>
    <property type="match status" value="1"/>
</dbReference>
<dbReference type="Pfam" id="PF00006">
    <property type="entry name" value="ATP-synt_ab"/>
    <property type="match status" value="1"/>
</dbReference>
<dbReference type="Pfam" id="PF00306">
    <property type="entry name" value="ATP-synt_ab_C"/>
    <property type="match status" value="1"/>
</dbReference>
<dbReference type="Pfam" id="PF02874">
    <property type="entry name" value="ATP-synt_ab_N"/>
    <property type="match status" value="1"/>
</dbReference>
<dbReference type="SUPFAM" id="SSF47917">
    <property type="entry name" value="C-terminal domain of alpha and beta subunits of F1 ATP synthase"/>
    <property type="match status" value="1"/>
</dbReference>
<dbReference type="SUPFAM" id="SSF50615">
    <property type="entry name" value="N-terminal domain of alpha and beta subunits of F1 ATP synthase"/>
    <property type="match status" value="1"/>
</dbReference>
<dbReference type="SUPFAM" id="SSF52540">
    <property type="entry name" value="P-loop containing nucleoside triphosphate hydrolases"/>
    <property type="match status" value="1"/>
</dbReference>
<dbReference type="PROSITE" id="PS00152">
    <property type="entry name" value="ATPASE_ALPHA_BETA"/>
    <property type="match status" value="1"/>
</dbReference>